<name>THIM_CLOBA</name>
<organism>
    <name type="scientific">Clostridium botulinum (strain Alaska E43 / Type E3)</name>
    <dbReference type="NCBI Taxonomy" id="508767"/>
    <lineage>
        <taxon>Bacteria</taxon>
        <taxon>Bacillati</taxon>
        <taxon>Bacillota</taxon>
        <taxon>Clostridia</taxon>
        <taxon>Eubacteriales</taxon>
        <taxon>Clostridiaceae</taxon>
        <taxon>Clostridium</taxon>
    </lineage>
</organism>
<keyword id="KW-0067">ATP-binding</keyword>
<keyword id="KW-0418">Kinase</keyword>
<keyword id="KW-0460">Magnesium</keyword>
<keyword id="KW-0479">Metal-binding</keyword>
<keyword id="KW-0547">Nucleotide-binding</keyword>
<keyword id="KW-0784">Thiamine biosynthesis</keyword>
<keyword id="KW-0808">Transferase</keyword>
<sequence>MINEILDKVGRLLEEVRTKKPLVHSITNYITATDCANVILAVGGSPTMADYVKEVEEIASISSAVVLNMGVISEKMVEAMILAGKSANKNNVPVIFDPVGAGVANFRNKSAEKILSEVKVDIIRGNISEIKFICGLRSETKGVDASERDMNMGNDKKVIVAQELAKKLNCVVAITGVDDIISDGKRNVILSNGHKMLANVTGTGCMSSALCGAFAGASDDYFIAAICAVLTMSISGEIAYEKSKGIGMGTFHISLIDAISMMNENVIKEKARVTTINR</sequence>
<reference key="1">
    <citation type="submission" date="2008-05" db="EMBL/GenBank/DDBJ databases">
        <title>Complete genome sequence of Clostridium botulinum E3 str. Alaska E43.</title>
        <authorList>
            <person name="Brinkac L.M."/>
            <person name="Brown J.L."/>
            <person name="Bruce D."/>
            <person name="Detter C."/>
            <person name="Munk C."/>
            <person name="Smith L.A."/>
            <person name="Smith T.J."/>
            <person name="Sutton G."/>
            <person name="Brettin T.S."/>
        </authorList>
    </citation>
    <scope>NUCLEOTIDE SEQUENCE [LARGE SCALE GENOMIC DNA]</scope>
    <source>
        <strain>Alaska E43 / Type E3</strain>
    </source>
</reference>
<accession>B2UY66</accession>
<protein>
    <recommendedName>
        <fullName evidence="1">Hydroxyethylthiazole kinase</fullName>
        <ecNumber evidence="1">2.7.1.50</ecNumber>
    </recommendedName>
    <alternativeName>
        <fullName evidence="1">4-methyl-5-beta-hydroxyethylthiazole kinase</fullName>
        <shortName evidence="1">TH kinase</shortName>
        <shortName evidence="1">Thz kinase</shortName>
    </alternativeName>
</protein>
<gene>
    <name evidence="1" type="primary">thiM</name>
    <name type="ordered locus">CLH_2856</name>
</gene>
<feature type="chain" id="PRO_0000383841" description="Hydroxyethylthiazole kinase">
    <location>
        <begin position="1"/>
        <end position="278"/>
    </location>
</feature>
<feature type="binding site" evidence="1">
    <location>
        <position position="48"/>
    </location>
    <ligand>
        <name>substrate</name>
    </ligand>
</feature>
<feature type="binding site" evidence="1">
    <location>
        <position position="124"/>
    </location>
    <ligand>
        <name>ATP</name>
        <dbReference type="ChEBI" id="CHEBI:30616"/>
    </ligand>
</feature>
<feature type="binding site" evidence="1">
    <location>
        <position position="175"/>
    </location>
    <ligand>
        <name>ATP</name>
        <dbReference type="ChEBI" id="CHEBI:30616"/>
    </ligand>
</feature>
<feature type="binding site" evidence="1">
    <location>
        <position position="202"/>
    </location>
    <ligand>
        <name>substrate</name>
    </ligand>
</feature>
<comment type="function">
    <text evidence="1">Catalyzes the phosphorylation of the hydroxyl group of 4-methyl-5-beta-hydroxyethylthiazole (THZ).</text>
</comment>
<comment type="catalytic activity">
    <reaction evidence="1">
        <text>5-(2-hydroxyethyl)-4-methylthiazole + ATP = 4-methyl-5-(2-phosphooxyethyl)-thiazole + ADP + H(+)</text>
        <dbReference type="Rhea" id="RHEA:24212"/>
        <dbReference type="ChEBI" id="CHEBI:15378"/>
        <dbReference type="ChEBI" id="CHEBI:17957"/>
        <dbReference type="ChEBI" id="CHEBI:30616"/>
        <dbReference type="ChEBI" id="CHEBI:58296"/>
        <dbReference type="ChEBI" id="CHEBI:456216"/>
        <dbReference type="EC" id="2.7.1.50"/>
    </reaction>
</comment>
<comment type="cofactor">
    <cofactor evidence="1">
        <name>Mg(2+)</name>
        <dbReference type="ChEBI" id="CHEBI:18420"/>
    </cofactor>
</comment>
<comment type="pathway">
    <text evidence="1">Cofactor biosynthesis; thiamine diphosphate biosynthesis; 4-methyl-5-(2-phosphoethyl)-thiazole from 5-(2-hydroxyethyl)-4-methylthiazole: step 1/1.</text>
</comment>
<comment type="similarity">
    <text evidence="1">Belongs to the Thz kinase family.</text>
</comment>
<proteinExistence type="inferred from homology"/>
<dbReference type="EC" id="2.7.1.50" evidence="1"/>
<dbReference type="EMBL" id="CP001078">
    <property type="protein sequence ID" value="ACD51149.1"/>
    <property type="molecule type" value="Genomic_DNA"/>
</dbReference>
<dbReference type="RefSeq" id="WP_012449569.1">
    <property type="nucleotide sequence ID" value="NC_010723.1"/>
</dbReference>
<dbReference type="SMR" id="B2UY66"/>
<dbReference type="KEGG" id="cbt:CLH_2856"/>
<dbReference type="HOGENOM" id="CLU_019943_0_1_9"/>
<dbReference type="UniPathway" id="UPA00060">
    <property type="reaction ID" value="UER00139"/>
</dbReference>
<dbReference type="GO" id="GO:0005524">
    <property type="term" value="F:ATP binding"/>
    <property type="evidence" value="ECO:0007669"/>
    <property type="project" value="UniProtKB-UniRule"/>
</dbReference>
<dbReference type="GO" id="GO:0004417">
    <property type="term" value="F:hydroxyethylthiazole kinase activity"/>
    <property type="evidence" value="ECO:0007669"/>
    <property type="project" value="UniProtKB-UniRule"/>
</dbReference>
<dbReference type="GO" id="GO:0000287">
    <property type="term" value="F:magnesium ion binding"/>
    <property type="evidence" value="ECO:0007669"/>
    <property type="project" value="UniProtKB-UniRule"/>
</dbReference>
<dbReference type="GO" id="GO:0009228">
    <property type="term" value="P:thiamine biosynthetic process"/>
    <property type="evidence" value="ECO:0007669"/>
    <property type="project" value="UniProtKB-KW"/>
</dbReference>
<dbReference type="GO" id="GO:0009229">
    <property type="term" value="P:thiamine diphosphate biosynthetic process"/>
    <property type="evidence" value="ECO:0007669"/>
    <property type="project" value="UniProtKB-UniRule"/>
</dbReference>
<dbReference type="CDD" id="cd01170">
    <property type="entry name" value="THZ_kinase"/>
    <property type="match status" value="1"/>
</dbReference>
<dbReference type="Gene3D" id="3.40.1190.20">
    <property type="match status" value="1"/>
</dbReference>
<dbReference type="HAMAP" id="MF_00228">
    <property type="entry name" value="Thz_kinase"/>
    <property type="match status" value="1"/>
</dbReference>
<dbReference type="InterPro" id="IPR000417">
    <property type="entry name" value="Hyethyz_kinase"/>
</dbReference>
<dbReference type="InterPro" id="IPR029056">
    <property type="entry name" value="Ribokinase-like"/>
</dbReference>
<dbReference type="NCBIfam" id="NF006830">
    <property type="entry name" value="PRK09355.1"/>
    <property type="match status" value="1"/>
</dbReference>
<dbReference type="NCBIfam" id="TIGR00694">
    <property type="entry name" value="thiM"/>
    <property type="match status" value="1"/>
</dbReference>
<dbReference type="Pfam" id="PF02110">
    <property type="entry name" value="HK"/>
    <property type="match status" value="1"/>
</dbReference>
<dbReference type="PIRSF" id="PIRSF000513">
    <property type="entry name" value="Thz_kinase"/>
    <property type="match status" value="1"/>
</dbReference>
<dbReference type="PRINTS" id="PR01099">
    <property type="entry name" value="HYETHTZKNASE"/>
</dbReference>
<dbReference type="SUPFAM" id="SSF53613">
    <property type="entry name" value="Ribokinase-like"/>
    <property type="match status" value="1"/>
</dbReference>
<evidence type="ECO:0000255" key="1">
    <source>
        <dbReference type="HAMAP-Rule" id="MF_00228"/>
    </source>
</evidence>